<protein>
    <recommendedName>
        <fullName evidence="1">Leucine--tRNA ligase</fullName>
        <ecNumber evidence="1">6.1.1.4</ecNumber>
    </recommendedName>
    <alternativeName>
        <fullName evidence="1">Leucyl-tRNA synthetase</fullName>
        <shortName evidence="1">LeuRS</shortName>
    </alternativeName>
</protein>
<comment type="catalytic activity">
    <reaction evidence="1">
        <text>tRNA(Leu) + L-leucine + ATP = L-leucyl-tRNA(Leu) + AMP + diphosphate</text>
        <dbReference type="Rhea" id="RHEA:11688"/>
        <dbReference type="Rhea" id="RHEA-COMP:9613"/>
        <dbReference type="Rhea" id="RHEA-COMP:9622"/>
        <dbReference type="ChEBI" id="CHEBI:30616"/>
        <dbReference type="ChEBI" id="CHEBI:33019"/>
        <dbReference type="ChEBI" id="CHEBI:57427"/>
        <dbReference type="ChEBI" id="CHEBI:78442"/>
        <dbReference type="ChEBI" id="CHEBI:78494"/>
        <dbReference type="ChEBI" id="CHEBI:456215"/>
        <dbReference type="EC" id="6.1.1.4"/>
    </reaction>
</comment>
<comment type="subcellular location">
    <subcellularLocation>
        <location evidence="1">Cytoplasm</location>
    </subcellularLocation>
</comment>
<comment type="similarity">
    <text evidence="1">Belongs to the class-I aminoacyl-tRNA synthetase family.</text>
</comment>
<feature type="chain" id="PRO_0000152011" description="Leucine--tRNA ligase">
    <location>
        <begin position="1"/>
        <end position="829"/>
    </location>
</feature>
<feature type="short sequence motif" description="'HIGH' region">
    <location>
        <begin position="40"/>
        <end position="50"/>
    </location>
</feature>
<feature type="short sequence motif" description="'KMSKS' region">
    <location>
        <begin position="581"/>
        <end position="585"/>
    </location>
</feature>
<feature type="binding site" evidence="1">
    <location>
        <position position="584"/>
    </location>
    <ligand>
        <name>ATP</name>
        <dbReference type="ChEBI" id="CHEBI:30616"/>
    </ligand>
</feature>
<accession>Q72CT7</accession>
<sequence>MKYDHQSIETRWQKKWEDSGIFQCDTEADKPKYYVLEMFPYPSGNIHMGHVRNYSIGDVVARFKRMQGFNVLHPMGWDAFGLPAENAAIKNGTHPAKWTFANIDNMRSQLKRLGYSYDWQREVATCTPEYYRWEQLFFLRFLEKGLVYRKKAAQNWCPKCHTVLANEQVIEGLCWRCDSAVEQKELTQWFLRITDYAEELLADLSKLENGWPERVLSMQRNWIGKSTGAEIRFALDGRDDSITVFTTRPDTIFGATFMSIAPEHPLVEELIDGKPQADDVRAFVERIRNMDRIDRQSDTLEKEGVFTGAYCVNPFTGRKMPIWVANFVLAEYGTGAVMAVPAHDQRDFEFARKYDLPMQVVIQPQGEALDPATMSAAWTEAGALVNSGAFDGLANEDAKQRIADDLETTGNGRRTINYRLRDWNISRQRYWGAPIPVIYCDACGVVPEKEENLPVVLPLDVKTHDDGRSPLPHTPAFYECTCPVCGGKARRETDTMDTFVESSWYFARYTDATNDKAPFTPDALRYWLPVDQYIGGVEHAILHLLYSRFFTKALRDCGFIELDEPFANLLTQGMVLMDGSKMSKSKGNVVDPTEMIARYGADTVRLFCLFAAPPERDFDWSESGIEGSYRFVGRVWRLVEELREHLLAVGACSSTAEDAKTPVARELRLKEHATVRKAGDDLNDRFQFNTAIAAVMELVNALYLAKDELVADESGRKVLSSAVSTVLTLLSPFTPHLSEELWALLGHTESVSTLPWPRWKEDALVRDTVTLVVQVNGKLRGKLDIPADASREEVETLALNEPNVLRYLEGVTVRKVVVIPGKLVNVVVS</sequence>
<reference key="1">
    <citation type="journal article" date="2004" name="Nat. Biotechnol.">
        <title>The genome sequence of the anaerobic, sulfate-reducing bacterium Desulfovibrio vulgaris Hildenborough.</title>
        <authorList>
            <person name="Heidelberg J.F."/>
            <person name="Seshadri R."/>
            <person name="Haveman S.A."/>
            <person name="Hemme C.L."/>
            <person name="Paulsen I.T."/>
            <person name="Kolonay J.F."/>
            <person name="Eisen J.A."/>
            <person name="Ward N.L."/>
            <person name="Methe B.A."/>
            <person name="Brinkac L.M."/>
            <person name="Daugherty S.C."/>
            <person name="DeBoy R.T."/>
            <person name="Dodson R.J."/>
            <person name="Durkin A.S."/>
            <person name="Madupu R."/>
            <person name="Nelson W.C."/>
            <person name="Sullivan S.A."/>
            <person name="Fouts D.E."/>
            <person name="Haft D.H."/>
            <person name="Selengut J."/>
            <person name="Peterson J.D."/>
            <person name="Davidsen T.M."/>
            <person name="Zafar N."/>
            <person name="Zhou L."/>
            <person name="Radune D."/>
            <person name="Dimitrov G."/>
            <person name="Hance M."/>
            <person name="Tran K."/>
            <person name="Khouri H.M."/>
            <person name="Gill J."/>
            <person name="Utterback T.R."/>
            <person name="Feldblyum T.V."/>
            <person name="Wall J.D."/>
            <person name="Voordouw G."/>
            <person name="Fraser C.M."/>
        </authorList>
    </citation>
    <scope>NUCLEOTIDE SEQUENCE [LARGE SCALE GENOMIC DNA]</scope>
    <source>
        <strain>ATCC 29579 / DSM 644 / CCUG 34227 / NCIMB 8303 / VKM B-1760 / Hildenborough</strain>
    </source>
</reference>
<proteinExistence type="inferred from homology"/>
<dbReference type="EC" id="6.1.1.4" evidence="1"/>
<dbReference type="EMBL" id="AE017285">
    <property type="protein sequence ID" value="AAS95674.1"/>
    <property type="molecule type" value="Genomic_DNA"/>
</dbReference>
<dbReference type="RefSeq" id="WP_010938492.1">
    <property type="nucleotide sequence ID" value="NC_002937.3"/>
</dbReference>
<dbReference type="RefSeq" id="YP_010415.1">
    <property type="nucleotide sequence ID" value="NC_002937.3"/>
</dbReference>
<dbReference type="SMR" id="Q72CT7"/>
<dbReference type="IntAct" id="Q72CT7">
    <property type="interactions" value="2"/>
</dbReference>
<dbReference type="STRING" id="882.DVU_1196"/>
<dbReference type="PaxDb" id="882-DVU_1196"/>
<dbReference type="EnsemblBacteria" id="AAS95674">
    <property type="protein sequence ID" value="AAS95674"/>
    <property type="gene ID" value="DVU_1196"/>
</dbReference>
<dbReference type="KEGG" id="dvu:DVU_1196"/>
<dbReference type="PATRIC" id="fig|882.5.peg.1120"/>
<dbReference type="eggNOG" id="COG0495">
    <property type="taxonomic scope" value="Bacteria"/>
</dbReference>
<dbReference type="HOGENOM" id="CLU_004427_0_0_7"/>
<dbReference type="OrthoDB" id="9810365at2"/>
<dbReference type="PhylomeDB" id="Q72CT7"/>
<dbReference type="Proteomes" id="UP000002194">
    <property type="component" value="Chromosome"/>
</dbReference>
<dbReference type="GO" id="GO:0005829">
    <property type="term" value="C:cytosol"/>
    <property type="evidence" value="ECO:0007669"/>
    <property type="project" value="TreeGrafter"/>
</dbReference>
<dbReference type="GO" id="GO:0002161">
    <property type="term" value="F:aminoacyl-tRNA deacylase activity"/>
    <property type="evidence" value="ECO:0007669"/>
    <property type="project" value="InterPro"/>
</dbReference>
<dbReference type="GO" id="GO:0005524">
    <property type="term" value="F:ATP binding"/>
    <property type="evidence" value="ECO:0007669"/>
    <property type="project" value="UniProtKB-UniRule"/>
</dbReference>
<dbReference type="GO" id="GO:0004823">
    <property type="term" value="F:leucine-tRNA ligase activity"/>
    <property type="evidence" value="ECO:0007669"/>
    <property type="project" value="UniProtKB-UniRule"/>
</dbReference>
<dbReference type="GO" id="GO:0006429">
    <property type="term" value="P:leucyl-tRNA aminoacylation"/>
    <property type="evidence" value="ECO:0007669"/>
    <property type="project" value="UniProtKB-UniRule"/>
</dbReference>
<dbReference type="CDD" id="cd07958">
    <property type="entry name" value="Anticodon_Ia_Leu_BEm"/>
    <property type="match status" value="1"/>
</dbReference>
<dbReference type="CDD" id="cd00812">
    <property type="entry name" value="LeuRS_core"/>
    <property type="match status" value="1"/>
</dbReference>
<dbReference type="FunFam" id="3.10.20.590:FF:000001">
    <property type="entry name" value="Leucine--tRNA ligase"/>
    <property type="match status" value="1"/>
</dbReference>
<dbReference type="FunFam" id="3.40.50.620:FF:000003">
    <property type="entry name" value="Leucine--tRNA ligase"/>
    <property type="match status" value="1"/>
</dbReference>
<dbReference type="FunFam" id="3.40.50.620:FF:000056">
    <property type="entry name" value="Leucine--tRNA ligase"/>
    <property type="match status" value="1"/>
</dbReference>
<dbReference type="FunFam" id="1.10.730.10:FF:000011">
    <property type="entry name" value="Leucine--tRNA ligase chloroplastic/mitochondrial"/>
    <property type="match status" value="1"/>
</dbReference>
<dbReference type="Gene3D" id="3.10.20.590">
    <property type="match status" value="1"/>
</dbReference>
<dbReference type="Gene3D" id="3.40.50.620">
    <property type="entry name" value="HUPs"/>
    <property type="match status" value="2"/>
</dbReference>
<dbReference type="Gene3D" id="1.10.730.10">
    <property type="entry name" value="Isoleucyl-tRNA Synthetase, Domain 1"/>
    <property type="match status" value="1"/>
</dbReference>
<dbReference type="HAMAP" id="MF_00049_B">
    <property type="entry name" value="Leu_tRNA_synth_B"/>
    <property type="match status" value="1"/>
</dbReference>
<dbReference type="InterPro" id="IPR001412">
    <property type="entry name" value="aa-tRNA-synth_I_CS"/>
</dbReference>
<dbReference type="InterPro" id="IPR002300">
    <property type="entry name" value="aa-tRNA-synth_Ia"/>
</dbReference>
<dbReference type="InterPro" id="IPR002302">
    <property type="entry name" value="Leu-tRNA-ligase"/>
</dbReference>
<dbReference type="InterPro" id="IPR025709">
    <property type="entry name" value="Leu_tRNA-synth_edit"/>
</dbReference>
<dbReference type="InterPro" id="IPR013155">
    <property type="entry name" value="M/V/L/I-tRNA-synth_anticd-bd"/>
</dbReference>
<dbReference type="InterPro" id="IPR015413">
    <property type="entry name" value="Methionyl/Leucyl_tRNA_Synth"/>
</dbReference>
<dbReference type="InterPro" id="IPR014729">
    <property type="entry name" value="Rossmann-like_a/b/a_fold"/>
</dbReference>
<dbReference type="InterPro" id="IPR009080">
    <property type="entry name" value="tRNAsynth_Ia_anticodon-bd"/>
</dbReference>
<dbReference type="InterPro" id="IPR009008">
    <property type="entry name" value="Val/Leu/Ile-tRNA-synth_edit"/>
</dbReference>
<dbReference type="NCBIfam" id="TIGR00396">
    <property type="entry name" value="leuS_bact"/>
    <property type="match status" value="1"/>
</dbReference>
<dbReference type="PANTHER" id="PTHR43740:SF2">
    <property type="entry name" value="LEUCINE--TRNA LIGASE, MITOCHONDRIAL"/>
    <property type="match status" value="1"/>
</dbReference>
<dbReference type="PANTHER" id="PTHR43740">
    <property type="entry name" value="LEUCYL-TRNA SYNTHETASE"/>
    <property type="match status" value="1"/>
</dbReference>
<dbReference type="Pfam" id="PF08264">
    <property type="entry name" value="Anticodon_1"/>
    <property type="match status" value="1"/>
</dbReference>
<dbReference type="Pfam" id="PF00133">
    <property type="entry name" value="tRNA-synt_1"/>
    <property type="match status" value="1"/>
</dbReference>
<dbReference type="Pfam" id="PF13603">
    <property type="entry name" value="tRNA-synt_1_2"/>
    <property type="match status" value="1"/>
</dbReference>
<dbReference type="Pfam" id="PF09334">
    <property type="entry name" value="tRNA-synt_1g"/>
    <property type="match status" value="1"/>
</dbReference>
<dbReference type="PRINTS" id="PR00985">
    <property type="entry name" value="TRNASYNTHLEU"/>
</dbReference>
<dbReference type="SUPFAM" id="SSF47323">
    <property type="entry name" value="Anticodon-binding domain of a subclass of class I aminoacyl-tRNA synthetases"/>
    <property type="match status" value="1"/>
</dbReference>
<dbReference type="SUPFAM" id="SSF52374">
    <property type="entry name" value="Nucleotidylyl transferase"/>
    <property type="match status" value="1"/>
</dbReference>
<dbReference type="SUPFAM" id="SSF50677">
    <property type="entry name" value="ValRS/IleRS/LeuRS editing domain"/>
    <property type="match status" value="1"/>
</dbReference>
<dbReference type="PROSITE" id="PS00178">
    <property type="entry name" value="AA_TRNA_LIGASE_I"/>
    <property type="match status" value="1"/>
</dbReference>
<name>SYL_NITV2</name>
<evidence type="ECO:0000255" key="1">
    <source>
        <dbReference type="HAMAP-Rule" id="MF_00049"/>
    </source>
</evidence>
<gene>
    <name evidence="1" type="primary">leuS</name>
    <name type="ordered locus">DVU_1196</name>
</gene>
<organism>
    <name type="scientific">Nitratidesulfovibrio vulgaris (strain ATCC 29579 / DSM 644 / CCUG 34227 / NCIMB 8303 / VKM B-1760 / Hildenborough)</name>
    <name type="common">Desulfovibrio vulgaris</name>
    <dbReference type="NCBI Taxonomy" id="882"/>
    <lineage>
        <taxon>Bacteria</taxon>
        <taxon>Pseudomonadati</taxon>
        <taxon>Thermodesulfobacteriota</taxon>
        <taxon>Desulfovibrionia</taxon>
        <taxon>Desulfovibrionales</taxon>
        <taxon>Desulfovibrionaceae</taxon>
        <taxon>Nitratidesulfovibrio</taxon>
    </lineage>
</organism>
<keyword id="KW-0030">Aminoacyl-tRNA synthetase</keyword>
<keyword id="KW-0067">ATP-binding</keyword>
<keyword id="KW-0963">Cytoplasm</keyword>
<keyword id="KW-0436">Ligase</keyword>
<keyword id="KW-0547">Nucleotide-binding</keyword>
<keyword id="KW-0648">Protein biosynthesis</keyword>
<keyword id="KW-1185">Reference proteome</keyword>